<reference key="1">
    <citation type="submission" date="2006-06" db="EMBL/GenBank/DDBJ databases">
        <title>Complete sequence of chromosome of Mycobacterium sp. MCS.</title>
        <authorList>
            <consortium name="US DOE Joint Genome Institute"/>
            <person name="Copeland A."/>
            <person name="Lucas S."/>
            <person name="Lapidus A."/>
            <person name="Barry K."/>
            <person name="Detter J.C."/>
            <person name="Glavina del Rio T."/>
            <person name="Hammon N."/>
            <person name="Israni S."/>
            <person name="Dalin E."/>
            <person name="Tice H."/>
            <person name="Pitluck S."/>
            <person name="Martinez M."/>
            <person name="Schmutz J."/>
            <person name="Larimer F."/>
            <person name="Land M."/>
            <person name="Hauser L."/>
            <person name="Kyrpides N."/>
            <person name="Kim E."/>
            <person name="Miller C.D."/>
            <person name="Hughes J.E."/>
            <person name="Anderson A.J."/>
            <person name="Sims R.C."/>
            <person name="Richardson P."/>
        </authorList>
    </citation>
    <scope>NUCLEOTIDE SEQUENCE [LARGE SCALE GENOMIC DNA]</scope>
    <source>
        <strain>MCS</strain>
    </source>
</reference>
<evidence type="ECO:0000250" key="1"/>
<evidence type="ECO:0000255" key="2"/>
<evidence type="ECO:0000256" key="3">
    <source>
        <dbReference type="SAM" id="MobiDB-lite"/>
    </source>
</evidence>
<evidence type="ECO:0000305" key="4"/>
<protein>
    <recommendedName>
        <fullName>Lysine N-acyltransferase MbtK</fullName>
        <shortName>N-acyltransferase MbtK</shortName>
        <ecNumber>2.3.1.-</ecNumber>
    </recommendedName>
    <alternativeName>
        <fullName>Mycobactin synthase protein K</fullName>
    </alternativeName>
</protein>
<organism>
    <name type="scientific">Mycobacterium sp. (strain MCS)</name>
    <dbReference type="NCBI Taxonomy" id="164756"/>
    <lineage>
        <taxon>Bacteria</taxon>
        <taxon>Bacillati</taxon>
        <taxon>Actinomycetota</taxon>
        <taxon>Actinomycetes</taxon>
        <taxon>Mycobacteriales</taxon>
        <taxon>Mycobacteriaceae</taxon>
        <taxon>Mycobacterium</taxon>
    </lineage>
</organism>
<proteinExistence type="inferred from homology"/>
<name>MBTK_MYCSS</name>
<feature type="chain" id="PRO_0000278303" description="Lysine N-acyltransferase MbtK">
    <location>
        <begin position="1"/>
        <end position="244"/>
    </location>
</feature>
<feature type="region of interest" description="Disordered" evidence="3">
    <location>
        <begin position="224"/>
        <end position="244"/>
    </location>
</feature>
<feature type="compositionally biased region" description="Polar residues" evidence="3">
    <location>
        <begin position="231"/>
        <end position="244"/>
    </location>
</feature>
<feature type="active site" description="Proton acceptor" evidence="2">
    <location>
        <position position="184"/>
    </location>
</feature>
<feature type="binding site" evidence="2">
    <location>
        <position position="146"/>
    </location>
    <ligand>
        <name>substrate</name>
    </ligand>
</feature>
<comment type="function">
    <text evidence="1">Acyltransferase required for the direct transfer of medium- to long-chain fatty acyl moieties from a carrier protein (MbtL) on to the epsilon-amino group of lysine residue in the mycobactin core.</text>
</comment>
<comment type="pathway">
    <text>Siderophore biosynthesis; mycobactin biosynthesis.</text>
</comment>
<comment type="subunit">
    <text evidence="1">Monomer.</text>
</comment>
<comment type="similarity">
    <text evidence="4">Belongs to the lysine N-acyltransferase MbtK family.</text>
</comment>
<sequence>MQHRDVGKPTLSYSGRLIAQMTEIDEALKPVLPRELTTVSDEVRAVPAPPLPVLAEPFALRPADPDADAEMISEWMNRPHLVEAWEYPWPPQRWRRHLKAQIDGEYSRPLIGSFKGADVVYVELYRAAKDSIAPRYAADPHDIGIHAAIADLRFVNRGFAPLLLPRVVASVFEIDPRCRRIMFDPDHRNTGARRVCEFAGCTFLGEHDMANRRMALYALPRTPADAPPTGDLQSSPVGESISSS</sequence>
<keyword id="KW-0012">Acyltransferase</keyword>
<keyword id="KW-0808">Transferase</keyword>
<gene>
    <name type="primary">mbtK</name>
    <name type="ordered locus">Mmcs_1721</name>
</gene>
<dbReference type="EC" id="2.3.1.-"/>
<dbReference type="EMBL" id="CP000384">
    <property type="protein sequence ID" value="ABG07830.1"/>
    <property type="molecule type" value="Genomic_DNA"/>
</dbReference>
<dbReference type="SMR" id="Q1BBA4"/>
<dbReference type="KEGG" id="mmc:Mmcs_1721"/>
<dbReference type="HOGENOM" id="CLU_039848_4_0_11"/>
<dbReference type="UniPathway" id="UPA00011"/>
<dbReference type="GO" id="GO:0016410">
    <property type="term" value="F:N-acyltransferase activity"/>
    <property type="evidence" value="ECO:0007669"/>
    <property type="project" value="TreeGrafter"/>
</dbReference>
<dbReference type="GO" id="GO:0019290">
    <property type="term" value="P:siderophore biosynthetic process"/>
    <property type="evidence" value="ECO:0007669"/>
    <property type="project" value="InterPro"/>
</dbReference>
<dbReference type="Gene3D" id="3.40.630.30">
    <property type="match status" value="1"/>
</dbReference>
<dbReference type="InterPro" id="IPR016181">
    <property type="entry name" value="Acyl_CoA_acyltransferase"/>
</dbReference>
<dbReference type="InterPro" id="IPR019432">
    <property type="entry name" value="Acyltransferase_MbtK/IucB-like"/>
</dbReference>
<dbReference type="PANTHER" id="PTHR31438">
    <property type="entry name" value="LYSINE N-ACYLTRANSFERASE C17G9.06C-RELATED"/>
    <property type="match status" value="1"/>
</dbReference>
<dbReference type="PANTHER" id="PTHR31438:SF1">
    <property type="entry name" value="LYSINE N-ACYLTRANSFERASE C17G9.06C-RELATED"/>
    <property type="match status" value="1"/>
</dbReference>
<dbReference type="Pfam" id="PF13523">
    <property type="entry name" value="Acetyltransf_8"/>
    <property type="match status" value="1"/>
</dbReference>
<dbReference type="SMART" id="SM01006">
    <property type="entry name" value="AlcB"/>
    <property type="match status" value="1"/>
</dbReference>
<dbReference type="SUPFAM" id="SSF55729">
    <property type="entry name" value="Acyl-CoA N-acyltransferases (Nat)"/>
    <property type="match status" value="1"/>
</dbReference>
<accession>Q1BBA4</accession>